<organism>
    <name type="scientific">Pseudomonas fluorescens (strain SBW25)</name>
    <dbReference type="NCBI Taxonomy" id="216595"/>
    <lineage>
        <taxon>Bacteria</taxon>
        <taxon>Pseudomonadati</taxon>
        <taxon>Pseudomonadota</taxon>
        <taxon>Gammaproteobacteria</taxon>
        <taxon>Pseudomonadales</taxon>
        <taxon>Pseudomonadaceae</taxon>
        <taxon>Pseudomonas</taxon>
    </lineage>
</organism>
<feature type="chain" id="PRO_0000161016" description="Histidine ammonia-lyase">
    <location>
        <begin position="1"/>
        <end position="512"/>
    </location>
</feature>
<feature type="modified residue" description="2,3-didehydroalanine (Ser)" evidence="1">
    <location>
        <position position="146"/>
    </location>
</feature>
<feature type="cross-link" description="5-imidazolinone (Ala-Gly)" evidence="1">
    <location>
        <begin position="145"/>
        <end position="147"/>
    </location>
</feature>
<feature type="sequence conflict" description="In Ref. 1; CAD19072." evidence="2" ref="1">
    <original>L</original>
    <variation>LQPQL</variation>
    <location>
        <position position="512"/>
    </location>
</feature>
<name>HUTH_PSEFS</name>
<evidence type="ECO:0000255" key="1">
    <source>
        <dbReference type="HAMAP-Rule" id="MF_00229"/>
    </source>
</evidence>
<evidence type="ECO:0000305" key="2"/>
<reference key="1">
    <citation type="submission" date="2001-12" db="EMBL/GenBank/DDBJ databases">
        <title>Using RIVET to study histidine availability in planta for plant growth-promoting Pseudomonas fluorescens SBW25.</title>
        <authorList>
            <person name="Zhang X.X."/>
        </authorList>
    </citation>
    <scope>NUCLEOTIDE SEQUENCE [GENOMIC DNA]</scope>
</reference>
<reference key="2">
    <citation type="journal article" date="2009" name="Genome Biol.">
        <title>Genomic and genetic analyses of diversity and plant interactions of Pseudomonas fluorescens.</title>
        <authorList>
            <person name="Silby M.W."/>
            <person name="Cerdeno-Tarraga A.M."/>
            <person name="Vernikos G.S."/>
            <person name="Giddens S.R."/>
            <person name="Jackson R.W."/>
            <person name="Preston G.M."/>
            <person name="Zhang X.-X."/>
            <person name="Moon C.D."/>
            <person name="Gehrig S.M."/>
            <person name="Godfrey S.A.C."/>
            <person name="Knight C.G."/>
            <person name="Malone J.G."/>
            <person name="Robinson Z."/>
            <person name="Spiers A.J."/>
            <person name="Harris S."/>
            <person name="Challis G.L."/>
            <person name="Yaxley A.M."/>
            <person name="Harris D."/>
            <person name="Seeger K."/>
            <person name="Murphy L."/>
            <person name="Rutter S."/>
            <person name="Squares R."/>
            <person name="Quail M.A."/>
            <person name="Saunders E."/>
            <person name="Mavromatis K."/>
            <person name="Brettin T.S."/>
            <person name="Bentley S.D."/>
            <person name="Hothersall J."/>
            <person name="Stephens E."/>
            <person name="Thomas C.M."/>
            <person name="Parkhill J."/>
            <person name="Levy S.B."/>
            <person name="Rainey P.B."/>
            <person name="Thomson N.R."/>
        </authorList>
    </citation>
    <scope>NUCLEOTIDE SEQUENCE [LARGE SCALE GENOMIC DNA]</scope>
    <source>
        <strain>SBW25</strain>
    </source>
</reference>
<accession>Q8VMR3</accession>
<accession>C3K809</accession>
<dbReference type="EC" id="4.3.1.3" evidence="1"/>
<dbReference type="EMBL" id="AJ421809">
    <property type="protein sequence ID" value="CAD19072.1"/>
    <property type="molecule type" value="Genomic_DNA"/>
</dbReference>
<dbReference type="EMBL" id="AM181176">
    <property type="protein sequence ID" value="CAY46644.1"/>
    <property type="molecule type" value="Genomic_DNA"/>
</dbReference>
<dbReference type="SMR" id="Q8VMR3"/>
<dbReference type="STRING" id="294.SRM1_00418"/>
<dbReference type="eggNOG" id="COG2986">
    <property type="taxonomic scope" value="Bacteria"/>
</dbReference>
<dbReference type="HOGENOM" id="CLU_014801_4_0_6"/>
<dbReference type="OrthoDB" id="9806955at2"/>
<dbReference type="UniPathway" id="UPA00379">
    <property type="reaction ID" value="UER00549"/>
</dbReference>
<dbReference type="GO" id="GO:0005737">
    <property type="term" value="C:cytoplasm"/>
    <property type="evidence" value="ECO:0007669"/>
    <property type="project" value="UniProtKB-SubCell"/>
</dbReference>
<dbReference type="GO" id="GO:0004397">
    <property type="term" value="F:histidine ammonia-lyase activity"/>
    <property type="evidence" value="ECO:0007669"/>
    <property type="project" value="UniProtKB-UniRule"/>
</dbReference>
<dbReference type="GO" id="GO:0019556">
    <property type="term" value="P:L-histidine catabolic process to glutamate and formamide"/>
    <property type="evidence" value="ECO:0007669"/>
    <property type="project" value="UniProtKB-UniPathway"/>
</dbReference>
<dbReference type="GO" id="GO:0019557">
    <property type="term" value="P:L-histidine catabolic process to glutamate and formate"/>
    <property type="evidence" value="ECO:0007669"/>
    <property type="project" value="UniProtKB-UniPathway"/>
</dbReference>
<dbReference type="CDD" id="cd00332">
    <property type="entry name" value="PAL-HAL"/>
    <property type="match status" value="1"/>
</dbReference>
<dbReference type="FunFam" id="1.10.275.10:FF:000005">
    <property type="entry name" value="Histidine ammonia-lyase"/>
    <property type="match status" value="1"/>
</dbReference>
<dbReference type="FunFam" id="1.20.200.10:FF:000003">
    <property type="entry name" value="Histidine ammonia-lyase"/>
    <property type="match status" value="1"/>
</dbReference>
<dbReference type="Gene3D" id="1.20.200.10">
    <property type="entry name" value="Fumarase/aspartase (Central domain)"/>
    <property type="match status" value="1"/>
</dbReference>
<dbReference type="Gene3D" id="1.10.275.10">
    <property type="entry name" value="Fumarase/aspartase (N-terminal domain)"/>
    <property type="match status" value="1"/>
</dbReference>
<dbReference type="HAMAP" id="MF_00229">
    <property type="entry name" value="His_ammonia_lyase"/>
    <property type="match status" value="1"/>
</dbReference>
<dbReference type="InterPro" id="IPR001106">
    <property type="entry name" value="Aromatic_Lyase"/>
</dbReference>
<dbReference type="InterPro" id="IPR024083">
    <property type="entry name" value="Fumarase/histidase_N"/>
</dbReference>
<dbReference type="InterPro" id="IPR005921">
    <property type="entry name" value="HutH"/>
</dbReference>
<dbReference type="InterPro" id="IPR008948">
    <property type="entry name" value="L-Aspartase-like"/>
</dbReference>
<dbReference type="InterPro" id="IPR022313">
    <property type="entry name" value="Phe/His_NH3-lyase_AS"/>
</dbReference>
<dbReference type="NCBIfam" id="TIGR01225">
    <property type="entry name" value="hutH"/>
    <property type="match status" value="1"/>
</dbReference>
<dbReference type="NCBIfam" id="NF006871">
    <property type="entry name" value="PRK09367.1"/>
    <property type="match status" value="1"/>
</dbReference>
<dbReference type="PANTHER" id="PTHR10362">
    <property type="entry name" value="HISTIDINE AMMONIA-LYASE"/>
    <property type="match status" value="1"/>
</dbReference>
<dbReference type="Pfam" id="PF00221">
    <property type="entry name" value="Lyase_aromatic"/>
    <property type="match status" value="1"/>
</dbReference>
<dbReference type="SUPFAM" id="SSF48557">
    <property type="entry name" value="L-aspartase-like"/>
    <property type="match status" value="1"/>
</dbReference>
<dbReference type="PROSITE" id="PS00488">
    <property type="entry name" value="PAL_HISTIDASE"/>
    <property type="match status" value="1"/>
</dbReference>
<comment type="catalytic activity">
    <reaction evidence="1">
        <text>L-histidine = trans-urocanate + NH4(+)</text>
        <dbReference type="Rhea" id="RHEA:21232"/>
        <dbReference type="ChEBI" id="CHEBI:17771"/>
        <dbReference type="ChEBI" id="CHEBI:28938"/>
        <dbReference type="ChEBI" id="CHEBI:57595"/>
        <dbReference type="EC" id="4.3.1.3"/>
    </reaction>
</comment>
<comment type="pathway">
    <text evidence="1">Amino-acid degradation; L-histidine degradation into L-glutamate; N-formimidoyl-L-glutamate from L-histidine: step 1/3.</text>
</comment>
<comment type="subcellular location">
    <subcellularLocation>
        <location evidence="1">Cytoplasm</location>
    </subcellularLocation>
</comment>
<comment type="PTM">
    <text evidence="1">Contains an active site 4-methylidene-imidazol-5-one (MIO), which is formed autocatalytically by cyclization and dehydration of residues Ala-Ser-Gly.</text>
</comment>
<comment type="similarity">
    <text evidence="1">Belongs to the PAL/histidase family.</text>
</comment>
<gene>
    <name evidence="1" type="primary">hutH</name>
    <name type="synonym">hutH-1</name>
    <name type="ordered locus">PFLU_0367</name>
</gene>
<protein>
    <recommendedName>
        <fullName evidence="1">Histidine ammonia-lyase</fullName>
        <shortName evidence="1">Histidase</shortName>
        <ecNumber evidence="1">4.3.1.3</ecNumber>
    </recommendedName>
</protein>
<keyword id="KW-0963">Cytoplasm</keyword>
<keyword id="KW-0369">Histidine metabolism</keyword>
<keyword id="KW-0456">Lyase</keyword>
<proteinExistence type="inferred from homology"/>
<sequence>MNVTALNLIPGQLSLAQLRAIYQQPVTLRLDDSATAQIEASVACVEQILAENRTAYGINTGFGLLASTRIASEDLENLQRSLVLSHAAGVGEPISDALVRLVMVLKVNSLSRGFSGIRRQVIDALIALINAEVYPHIPLKGSVGASGDLAPLAHMSLVLLGEGKARYKGEWLEATEALKVAGLTPLTLAAKEGLALLNGTQVSTAYALRGLFEGEDLFAGALACGGLTVEAVLGSRSPFDARIHAARGQRGQIDSAAAYRDLLGESSQVSQSHQNCDKVQDPYSLRCQPQVMGACLTQFRQAAEVLVVEANAVSDNPLVFAAEGDVISGGNFHAEPVAMAADNMALAIAEIGSLSERRISLMMDKHMSQLPPFLVGNGGVNSGFMIAQVTAAALASENKALAHPHSVDSLPTSANQEDHVSMAPAAGKRLWEMAENTRGILAVEWLAACQGLDLREGLKTSPKLEKARGILRDKVAFYDKDRFFAPDINAASELLATRCLNELVPANLLPSL</sequence>